<feature type="chain" id="PRO_1000052411" description="Large ribosomal subunit protein uL4">
    <location>
        <begin position="1"/>
        <end position="200"/>
    </location>
</feature>
<feature type="region of interest" description="Disordered" evidence="2">
    <location>
        <begin position="43"/>
        <end position="71"/>
    </location>
</feature>
<comment type="function">
    <text evidence="1">One of the primary rRNA binding proteins, this protein initially binds near the 5'-end of the 23S rRNA. It is important during the early stages of 50S assembly. It makes multiple contacts with different domains of the 23S rRNA in the assembled 50S subunit and ribosome.</text>
</comment>
<comment type="function">
    <text evidence="1">Forms part of the polypeptide exit tunnel.</text>
</comment>
<comment type="subunit">
    <text evidence="1">Part of the 50S ribosomal subunit.</text>
</comment>
<comment type="similarity">
    <text evidence="1">Belongs to the universal ribosomal protein uL4 family.</text>
</comment>
<dbReference type="EMBL" id="CP000436">
    <property type="protein sequence ID" value="ABI24341.1"/>
    <property type="molecule type" value="Genomic_DNA"/>
</dbReference>
<dbReference type="SMR" id="Q0I162"/>
<dbReference type="KEGG" id="hso:HS_0060"/>
<dbReference type="eggNOG" id="COG0088">
    <property type="taxonomic scope" value="Bacteria"/>
</dbReference>
<dbReference type="HOGENOM" id="CLU_041575_5_2_6"/>
<dbReference type="GO" id="GO:1990904">
    <property type="term" value="C:ribonucleoprotein complex"/>
    <property type="evidence" value="ECO:0007669"/>
    <property type="project" value="UniProtKB-KW"/>
</dbReference>
<dbReference type="GO" id="GO:0005840">
    <property type="term" value="C:ribosome"/>
    <property type="evidence" value="ECO:0007669"/>
    <property type="project" value="UniProtKB-KW"/>
</dbReference>
<dbReference type="GO" id="GO:0019843">
    <property type="term" value="F:rRNA binding"/>
    <property type="evidence" value="ECO:0007669"/>
    <property type="project" value="UniProtKB-UniRule"/>
</dbReference>
<dbReference type="GO" id="GO:0003735">
    <property type="term" value="F:structural constituent of ribosome"/>
    <property type="evidence" value="ECO:0007669"/>
    <property type="project" value="InterPro"/>
</dbReference>
<dbReference type="GO" id="GO:0006412">
    <property type="term" value="P:translation"/>
    <property type="evidence" value="ECO:0007669"/>
    <property type="project" value="UniProtKB-UniRule"/>
</dbReference>
<dbReference type="FunFam" id="3.40.1370.10:FF:000001">
    <property type="entry name" value="50S ribosomal protein L4"/>
    <property type="match status" value="1"/>
</dbReference>
<dbReference type="Gene3D" id="3.40.1370.10">
    <property type="match status" value="1"/>
</dbReference>
<dbReference type="HAMAP" id="MF_01328_B">
    <property type="entry name" value="Ribosomal_uL4_B"/>
    <property type="match status" value="1"/>
</dbReference>
<dbReference type="InterPro" id="IPR002136">
    <property type="entry name" value="Ribosomal_uL4"/>
</dbReference>
<dbReference type="InterPro" id="IPR013005">
    <property type="entry name" value="Ribosomal_uL4-like"/>
</dbReference>
<dbReference type="InterPro" id="IPR023574">
    <property type="entry name" value="Ribosomal_uL4_dom_sf"/>
</dbReference>
<dbReference type="NCBIfam" id="TIGR03953">
    <property type="entry name" value="rplD_bact"/>
    <property type="match status" value="1"/>
</dbReference>
<dbReference type="PANTHER" id="PTHR10746">
    <property type="entry name" value="50S RIBOSOMAL PROTEIN L4"/>
    <property type="match status" value="1"/>
</dbReference>
<dbReference type="PANTHER" id="PTHR10746:SF6">
    <property type="entry name" value="LARGE RIBOSOMAL SUBUNIT PROTEIN UL4M"/>
    <property type="match status" value="1"/>
</dbReference>
<dbReference type="Pfam" id="PF00573">
    <property type="entry name" value="Ribosomal_L4"/>
    <property type="match status" value="1"/>
</dbReference>
<dbReference type="SUPFAM" id="SSF52166">
    <property type="entry name" value="Ribosomal protein L4"/>
    <property type="match status" value="1"/>
</dbReference>
<reference key="1">
    <citation type="journal article" date="2007" name="J. Bacteriol.">
        <title>Complete genome sequence of Haemophilus somnus (Histophilus somni) strain 129Pt and comparison to Haemophilus ducreyi 35000HP and Haemophilus influenzae Rd.</title>
        <authorList>
            <person name="Challacombe J.F."/>
            <person name="Duncan A.J."/>
            <person name="Brettin T.S."/>
            <person name="Bruce D."/>
            <person name="Chertkov O."/>
            <person name="Detter J.C."/>
            <person name="Han C.S."/>
            <person name="Misra M."/>
            <person name="Richardson P."/>
            <person name="Tapia R."/>
            <person name="Thayer N."/>
            <person name="Xie G."/>
            <person name="Inzana T.J."/>
        </authorList>
    </citation>
    <scope>NUCLEOTIDE SEQUENCE [LARGE SCALE GENOMIC DNA]</scope>
    <source>
        <strain>129Pt</strain>
    </source>
</reference>
<protein>
    <recommendedName>
        <fullName evidence="1">Large ribosomal subunit protein uL4</fullName>
    </recommendedName>
    <alternativeName>
        <fullName evidence="3">50S ribosomal protein L4</fullName>
    </alternativeName>
</protein>
<accession>Q0I162</accession>
<proteinExistence type="inferred from homology"/>
<gene>
    <name evidence="1" type="primary">rplD</name>
    <name type="ordered locus">HS_0060</name>
</gene>
<evidence type="ECO:0000255" key="1">
    <source>
        <dbReference type="HAMAP-Rule" id="MF_01328"/>
    </source>
</evidence>
<evidence type="ECO:0000256" key="2">
    <source>
        <dbReference type="SAM" id="MobiDB-lite"/>
    </source>
</evidence>
<evidence type="ECO:0000305" key="3"/>
<name>RL4_HISS1</name>
<keyword id="KW-0687">Ribonucleoprotein</keyword>
<keyword id="KW-0689">Ribosomal protein</keyword>
<keyword id="KW-0694">RNA-binding</keyword>
<keyword id="KW-0699">rRNA-binding</keyword>
<sequence>MELQVVGANALTVSETTFGREFNEALIHQVVVAYAAGARQGSRAQKTRAEVSGSGKKPWRQKGTGRARSGDIKSPIWRSGGVTFAAKPQDHSQKVNKKMYRGAIKSILSELVRQDRLVVVEKFEIDAPKTKVLVQKLKDMALTDALIITASLDENLFLAARNLYKVDVRDVQAIDPVSLIAFDKVVVTVDAVKQIEEMFA</sequence>
<organism>
    <name type="scientific">Histophilus somni (strain 129Pt)</name>
    <name type="common">Haemophilus somnus</name>
    <dbReference type="NCBI Taxonomy" id="205914"/>
    <lineage>
        <taxon>Bacteria</taxon>
        <taxon>Pseudomonadati</taxon>
        <taxon>Pseudomonadota</taxon>
        <taxon>Gammaproteobacteria</taxon>
        <taxon>Pasteurellales</taxon>
        <taxon>Pasteurellaceae</taxon>
        <taxon>Histophilus</taxon>
    </lineage>
</organism>